<proteinExistence type="evidence at transcript level"/>
<reference key="1">
    <citation type="journal article" date="2005" name="Nature">
        <title>The map-based sequence of the rice genome.</title>
        <authorList>
            <consortium name="International rice genome sequencing project (IRGSP)"/>
        </authorList>
    </citation>
    <scope>NUCLEOTIDE SEQUENCE [LARGE SCALE GENOMIC DNA]</scope>
    <source>
        <strain>cv. Nipponbare</strain>
    </source>
</reference>
<reference key="2">
    <citation type="journal article" date="2008" name="Nucleic Acids Res.">
        <title>The rice annotation project database (RAP-DB): 2008 update.</title>
        <authorList>
            <consortium name="The rice annotation project (RAP)"/>
        </authorList>
    </citation>
    <scope>GENOME REANNOTATION</scope>
    <source>
        <strain>cv. Nipponbare</strain>
    </source>
</reference>
<reference key="3">
    <citation type="journal article" date="2013" name="Rice">
        <title>Improvement of the Oryza sativa Nipponbare reference genome using next generation sequence and optical map data.</title>
        <authorList>
            <person name="Kawahara Y."/>
            <person name="de la Bastide M."/>
            <person name="Hamilton J.P."/>
            <person name="Kanamori H."/>
            <person name="McCombie W.R."/>
            <person name="Ouyang S."/>
            <person name="Schwartz D.C."/>
            <person name="Tanaka T."/>
            <person name="Wu J."/>
            <person name="Zhou S."/>
            <person name="Childs K.L."/>
            <person name="Davidson R.M."/>
            <person name="Lin H."/>
            <person name="Quesada-Ocampo L."/>
            <person name="Vaillancourt B."/>
            <person name="Sakai H."/>
            <person name="Lee S.S."/>
            <person name="Kim J."/>
            <person name="Numa H."/>
            <person name="Itoh T."/>
            <person name="Buell C.R."/>
            <person name="Matsumoto T."/>
        </authorList>
    </citation>
    <scope>GENOME REANNOTATION</scope>
    <source>
        <strain>cv. Nipponbare</strain>
    </source>
</reference>
<reference key="4">
    <citation type="journal article" date="2005" name="PLoS Biol.">
        <title>The genomes of Oryza sativa: a history of duplications.</title>
        <authorList>
            <person name="Yu J."/>
            <person name="Wang J."/>
            <person name="Lin W."/>
            <person name="Li S."/>
            <person name="Li H."/>
            <person name="Zhou J."/>
            <person name="Ni P."/>
            <person name="Dong W."/>
            <person name="Hu S."/>
            <person name="Zeng C."/>
            <person name="Zhang J."/>
            <person name="Zhang Y."/>
            <person name="Li R."/>
            <person name="Xu Z."/>
            <person name="Li S."/>
            <person name="Li X."/>
            <person name="Zheng H."/>
            <person name="Cong L."/>
            <person name="Lin L."/>
            <person name="Yin J."/>
            <person name="Geng J."/>
            <person name="Li G."/>
            <person name="Shi J."/>
            <person name="Liu J."/>
            <person name="Lv H."/>
            <person name="Li J."/>
            <person name="Wang J."/>
            <person name="Deng Y."/>
            <person name="Ran L."/>
            <person name="Shi X."/>
            <person name="Wang X."/>
            <person name="Wu Q."/>
            <person name="Li C."/>
            <person name="Ren X."/>
            <person name="Wang J."/>
            <person name="Wang X."/>
            <person name="Li D."/>
            <person name="Liu D."/>
            <person name="Zhang X."/>
            <person name="Ji Z."/>
            <person name="Zhao W."/>
            <person name="Sun Y."/>
            <person name="Zhang Z."/>
            <person name="Bao J."/>
            <person name="Han Y."/>
            <person name="Dong L."/>
            <person name="Ji J."/>
            <person name="Chen P."/>
            <person name="Wu S."/>
            <person name="Liu J."/>
            <person name="Xiao Y."/>
            <person name="Bu D."/>
            <person name="Tan J."/>
            <person name="Yang L."/>
            <person name="Ye C."/>
            <person name="Zhang J."/>
            <person name="Xu J."/>
            <person name="Zhou Y."/>
            <person name="Yu Y."/>
            <person name="Zhang B."/>
            <person name="Zhuang S."/>
            <person name="Wei H."/>
            <person name="Liu B."/>
            <person name="Lei M."/>
            <person name="Yu H."/>
            <person name="Li Y."/>
            <person name="Xu H."/>
            <person name="Wei S."/>
            <person name="He X."/>
            <person name="Fang L."/>
            <person name="Zhang Z."/>
            <person name="Zhang Y."/>
            <person name="Huang X."/>
            <person name="Su Z."/>
            <person name="Tong W."/>
            <person name="Li J."/>
            <person name="Tong Z."/>
            <person name="Li S."/>
            <person name="Ye J."/>
            <person name="Wang L."/>
            <person name="Fang L."/>
            <person name="Lei T."/>
            <person name="Chen C.-S."/>
            <person name="Chen H.-C."/>
            <person name="Xu Z."/>
            <person name="Li H."/>
            <person name="Huang H."/>
            <person name="Zhang F."/>
            <person name="Xu H."/>
            <person name="Li N."/>
            <person name="Zhao C."/>
            <person name="Li S."/>
            <person name="Dong L."/>
            <person name="Huang Y."/>
            <person name="Li L."/>
            <person name="Xi Y."/>
            <person name="Qi Q."/>
            <person name="Li W."/>
            <person name="Zhang B."/>
            <person name="Hu W."/>
            <person name="Zhang Y."/>
            <person name="Tian X."/>
            <person name="Jiao Y."/>
            <person name="Liang X."/>
            <person name="Jin J."/>
            <person name="Gao L."/>
            <person name="Zheng W."/>
            <person name="Hao B."/>
            <person name="Liu S.-M."/>
            <person name="Wang W."/>
            <person name="Yuan L."/>
            <person name="Cao M."/>
            <person name="McDermott J."/>
            <person name="Samudrala R."/>
            <person name="Wang J."/>
            <person name="Wong G.K.-S."/>
            <person name="Yang H."/>
        </authorList>
    </citation>
    <scope>NUCLEOTIDE SEQUENCE [LARGE SCALE GENOMIC DNA]</scope>
    <source>
        <strain>cv. Nipponbare</strain>
    </source>
</reference>
<reference key="5">
    <citation type="journal article" date="2003" name="Science">
        <title>Collection, mapping, and annotation of over 28,000 cDNA clones from japonica rice.</title>
        <authorList>
            <consortium name="The rice full-length cDNA consortium"/>
        </authorList>
    </citation>
    <scope>NUCLEOTIDE SEQUENCE [LARGE SCALE MRNA]</scope>
    <source>
        <strain>cv. Nipponbare</strain>
    </source>
</reference>
<gene>
    <name type="ordered locus">Os02g0815500</name>
    <name type="ordered locus">LOC_Os02g57040</name>
    <name type="ORF">OsJ_008550</name>
    <name type="ORF">P0643F09.4</name>
</gene>
<comment type="catalytic activity">
    <reaction evidence="3">
        <text>a primary alcohol + NAD(+) = an aldehyde + NADH + H(+)</text>
        <dbReference type="Rhea" id="RHEA:10736"/>
        <dbReference type="ChEBI" id="CHEBI:15378"/>
        <dbReference type="ChEBI" id="CHEBI:15734"/>
        <dbReference type="ChEBI" id="CHEBI:17478"/>
        <dbReference type="ChEBI" id="CHEBI:57540"/>
        <dbReference type="ChEBI" id="CHEBI:57945"/>
        <dbReference type="EC" id="1.1.1.1"/>
    </reaction>
</comment>
<comment type="catalytic activity">
    <reaction evidence="3">
        <text>a secondary alcohol + NAD(+) = a ketone + NADH + H(+)</text>
        <dbReference type="Rhea" id="RHEA:10740"/>
        <dbReference type="ChEBI" id="CHEBI:15378"/>
        <dbReference type="ChEBI" id="CHEBI:17087"/>
        <dbReference type="ChEBI" id="CHEBI:35681"/>
        <dbReference type="ChEBI" id="CHEBI:57540"/>
        <dbReference type="ChEBI" id="CHEBI:57945"/>
        <dbReference type="EC" id="1.1.1.1"/>
    </reaction>
</comment>
<comment type="catalytic activity">
    <reaction evidence="3">
        <text>S-(hydroxymethyl)glutathione + NADP(+) = S-formylglutathione + NADPH + H(+)</text>
        <dbReference type="Rhea" id="RHEA:19981"/>
        <dbReference type="ChEBI" id="CHEBI:15378"/>
        <dbReference type="ChEBI" id="CHEBI:57688"/>
        <dbReference type="ChEBI" id="CHEBI:57783"/>
        <dbReference type="ChEBI" id="CHEBI:58349"/>
        <dbReference type="ChEBI" id="CHEBI:58758"/>
        <dbReference type="EC" id="1.1.1.284"/>
    </reaction>
</comment>
<comment type="catalytic activity">
    <reaction evidence="3">
        <text>S-(hydroxymethyl)glutathione + NAD(+) = S-formylglutathione + NADH + H(+)</text>
        <dbReference type="Rhea" id="RHEA:19985"/>
        <dbReference type="ChEBI" id="CHEBI:15378"/>
        <dbReference type="ChEBI" id="CHEBI:57540"/>
        <dbReference type="ChEBI" id="CHEBI:57688"/>
        <dbReference type="ChEBI" id="CHEBI:57945"/>
        <dbReference type="ChEBI" id="CHEBI:58758"/>
        <dbReference type="EC" id="1.1.1.284"/>
    </reaction>
</comment>
<comment type="cofactor">
    <cofactor evidence="3">
        <name>Zn(2+)</name>
        <dbReference type="ChEBI" id="CHEBI:29105"/>
    </cofactor>
    <text evidence="3">Binds 2 Zn(2+) ions per subunit.</text>
</comment>
<comment type="subunit">
    <text evidence="3">Homodimer.</text>
</comment>
<comment type="subcellular location">
    <subcellularLocation>
        <location evidence="2">Cytoplasm</location>
    </subcellularLocation>
</comment>
<comment type="similarity">
    <text evidence="4">Belongs to the zinc-containing alcohol dehydrogenase family. Class-III subfamily.</text>
</comment>
<organism>
    <name type="scientific">Oryza sativa subsp. japonica</name>
    <name type="common">Rice</name>
    <dbReference type="NCBI Taxonomy" id="39947"/>
    <lineage>
        <taxon>Eukaryota</taxon>
        <taxon>Viridiplantae</taxon>
        <taxon>Streptophyta</taxon>
        <taxon>Embryophyta</taxon>
        <taxon>Tracheophyta</taxon>
        <taxon>Spermatophyta</taxon>
        <taxon>Magnoliopsida</taxon>
        <taxon>Liliopsida</taxon>
        <taxon>Poales</taxon>
        <taxon>Poaceae</taxon>
        <taxon>BOP clade</taxon>
        <taxon>Oryzoideae</taxon>
        <taxon>Oryzeae</taxon>
        <taxon>Oryzinae</taxon>
        <taxon>Oryza</taxon>
        <taxon>Oryza sativa</taxon>
    </lineage>
</organism>
<evidence type="ECO:0000250" key="1">
    <source>
        <dbReference type="UniProtKB" id="P00327"/>
    </source>
</evidence>
<evidence type="ECO:0000250" key="2">
    <source>
        <dbReference type="UniProtKB" id="P06525"/>
    </source>
</evidence>
<evidence type="ECO:0000250" key="3">
    <source>
        <dbReference type="UniProtKB" id="Q96533"/>
    </source>
</evidence>
<evidence type="ECO:0000305" key="4"/>
<dbReference type="EC" id="1.1.1.1" evidence="3"/>
<dbReference type="EC" id="1.1.1.-"/>
<dbReference type="EC" id="1.1.1.284" evidence="3"/>
<dbReference type="EMBL" id="AP004120">
    <property type="protein sequence ID" value="BAD21676.1"/>
    <property type="molecule type" value="Genomic_DNA"/>
</dbReference>
<dbReference type="EMBL" id="AP005111">
    <property type="protein sequence ID" value="BAD21999.1"/>
    <property type="molecule type" value="Genomic_DNA"/>
</dbReference>
<dbReference type="EMBL" id="AP008208">
    <property type="protein sequence ID" value="BAF10417.1"/>
    <property type="molecule type" value="Genomic_DNA"/>
</dbReference>
<dbReference type="EMBL" id="AP014958">
    <property type="protein sequence ID" value="BAS81559.1"/>
    <property type="molecule type" value="Genomic_DNA"/>
</dbReference>
<dbReference type="EMBL" id="CM000139">
    <property type="protein sequence ID" value="EAZ25067.1"/>
    <property type="molecule type" value="Genomic_DNA"/>
</dbReference>
<dbReference type="EMBL" id="AK099733">
    <property type="status" value="NOT_ANNOTATED_CDS"/>
    <property type="molecule type" value="mRNA"/>
</dbReference>
<dbReference type="RefSeq" id="XP_015627169.1">
    <property type="nucleotide sequence ID" value="XM_015771683.1"/>
</dbReference>
<dbReference type="SMR" id="Q0DWH1"/>
<dbReference type="FunCoup" id="Q0DWH1">
    <property type="interactions" value="2936"/>
</dbReference>
<dbReference type="STRING" id="39947.Q0DWH1"/>
<dbReference type="PaxDb" id="39947-Q0DWH1"/>
<dbReference type="EnsemblPlants" id="Os02t0815500-01">
    <property type="protein sequence ID" value="Os02t0815500-01"/>
    <property type="gene ID" value="Os02g0815500"/>
</dbReference>
<dbReference type="Gramene" id="Os02t0815500-01">
    <property type="protein sequence ID" value="Os02t0815500-01"/>
    <property type="gene ID" value="Os02g0815500"/>
</dbReference>
<dbReference type="KEGG" id="dosa:Os02g0815500"/>
<dbReference type="eggNOG" id="KOG0022">
    <property type="taxonomic scope" value="Eukaryota"/>
</dbReference>
<dbReference type="HOGENOM" id="CLU_026673_14_0_1"/>
<dbReference type="InParanoid" id="Q0DWH1"/>
<dbReference type="OMA" id="IKGRSEM"/>
<dbReference type="OrthoDB" id="417550at2759"/>
<dbReference type="PlantReactome" id="R-OSA-1119267">
    <property type="pathway name" value="Phenylalanine degradation III"/>
</dbReference>
<dbReference type="Proteomes" id="UP000000763">
    <property type="component" value="Chromosome 2"/>
</dbReference>
<dbReference type="Proteomes" id="UP000007752">
    <property type="component" value="Chromosome 2"/>
</dbReference>
<dbReference type="Proteomes" id="UP000059680">
    <property type="component" value="Chromosome 2"/>
</dbReference>
<dbReference type="GO" id="GO:0005829">
    <property type="term" value="C:cytosol"/>
    <property type="evidence" value="ECO:0000318"/>
    <property type="project" value="GO_Central"/>
</dbReference>
<dbReference type="GO" id="GO:0004022">
    <property type="term" value="F:alcohol dehydrogenase (NAD+) activity"/>
    <property type="evidence" value="ECO:0000318"/>
    <property type="project" value="GO_Central"/>
</dbReference>
<dbReference type="GO" id="GO:0106322">
    <property type="term" value="F:S-(hydroxymethyl)glutathione dehydrogenase (NAD+) activity"/>
    <property type="evidence" value="ECO:0007669"/>
    <property type="project" value="RHEA"/>
</dbReference>
<dbReference type="GO" id="GO:0106321">
    <property type="term" value="F:S-(hydroxymethyl)glutathione dehydrogenase (NADP+) activity"/>
    <property type="evidence" value="ECO:0007669"/>
    <property type="project" value="RHEA"/>
</dbReference>
<dbReference type="GO" id="GO:0051903">
    <property type="term" value="F:S-(hydroxymethyl)glutathione dehydrogenase [NAD(P)+] activity"/>
    <property type="evidence" value="ECO:0000318"/>
    <property type="project" value="GO_Central"/>
</dbReference>
<dbReference type="GO" id="GO:0080007">
    <property type="term" value="F:S-nitrosoglutathione reductase (NADH) activity"/>
    <property type="evidence" value="ECO:0007669"/>
    <property type="project" value="EnsemblPlants"/>
</dbReference>
<dbReference type="GO" id="GO:0008270">
    <property type="term" value="F:zinc ion binding"/>
    <property type="evidence" value="ECO:0000318"/>
    <property type="project" value="GO_Central"/>
</dbReference>
<dbReference type="GO" id="GO:0046294">
    <property type="term" value="P:formaldehyde catabolic process"/>
    <property type="evidence" value="ECO:0000318"/>
    <property type="project" value="GO_Central"/>
</dbReference>
<dbReference type="GO" id="GO:0010286">
    <property type="term" value="P:heat acclimation"/>
    <property type="evidence" value="ECO:0007669"/>
    <property type="project" value="EnsemblPlants"/>
</dbReference>
<dbReference type="GO" id="GO:0048316">
    <property type="term" value="P:seed development"/>
    <property type="evidence" value="ECO:0007669"/>
    <property type="project" value="EnsemblPlants"/>
</dbReference>
<dbReference type="CDD" id="cd08300">
    <property type="entry name" value="alcohol_DH_class_III"/>
    <property type="match status" value="1"/>
</dbReference>
<dbReference type="FunFam" id="3.40.50.720:FF:000003">
    <property type="entry name" value="S-(hydroxymethyl)glutathione dehydrogenase"/>
    <property type="match status" value="1"/>
</dbReference>
<dbReference type="FunFam" id="3.90.180.10:FF:000001">
    <property type="entry name" value="S-(hydroxymethyl)glutathione dehydrogenase"/>
    <property type="match status" value="1"/>
</dbReference>
<dbReference type="Gene3D" id="3.90.180.10">
    <property type="entry name" value="Medium-chain alcohol dehydrogenases, catalytic domain"/>
    <property type="match status" value="1"/>
</dbReference>
<dbReference type="Gene3D" id="3.40.50.720">
    <property type="entry name" value="NAD(P)-binding Rossmann-like Domain"/>
    <property type="match status" value="1"/>
</dbReference>
<dbReference type="InterPro" id="IPR013149">
    <property type="entry name" value="ADH-like_C"/>
</dbReference>
<dbReference type="InterPro" id="IPR013154">
    <property type="entry name" value="ADH-like_N"/>
</dbReference>
<dbReference type="InterPro" id="IPR014183">
    <property type="entry name" value="ADH_3"/>
</dbReference>
<dbReference type="InterPro" id="IPR002328">
    <property type="entry name" value="ADH_Zn_CS"/>
</dbReference>
<dbReference type="InterPro" id="IPR011032">
    <property type="entry name" value="GroES-like_sf"/>
</dbReference>
<dbReference type="InterPro" id="IPR036291">
    <property type="entry name" value="NAD(P)-bd_dom_sf"/>
</dbReference>
<dbReference type="NCBIfam" id="TIGR02818">
    <property type="entry name" value="adh_III_F_hyde"/>
    <property type="match status" value="1"/>
</dbReference>
<dbReference type="PANTHER" id="PTHR43880">
    <property type="entry name" value="ALCOHOL DEHYDROGENASE"/>
    <property type="match status" value="1"/>
</dbReference>
<dbReference type="PANTHER" id="PTHR43880:SF58">
    <property type="entry name" value="ALCOHOL DEHYDROGENASE CLASS-3"/>
    <property type="match status" value="1"/>
</dbReference>
<dbReference type="Pfam" id="PF08240">
    <property type="entry name" value="ADH_N"/>
    <property type="match status" value="1"/>
</dbReference>
<dbReference type="Pfam" id="PF00107">
    <property type="entry name" value="ADH_zinc_N"/>
    <property type="match status" value="1"/>
</dbReference>
<dbReference type="SUPFAM" id="SSF50129">
    <property type="entry name" value="GroES-like"/>
    <property type="match status" value="2"/>
</dbReference>
<dbReference type="SUPFAM" id="SSF51735">
    <property type="entry name" value="NAD(P)-binding Rossmann-fold domains"/>
    <property type="match status" value="1"/>
</dbReference>
<dbReference type="PROSITE" id="PS00059">
    <property type="entry name" value="ADH_ZINC"/>
    <property type="match status" value="1"/>
</dbReference>
<sequence>MASSTQGQVITCKAAVAWEANRPMTIEDVQVAPPQAGEVRVKILFTALCHTDHYTWSGKDPEGLFPCILGHEAAGIVESVGEGVTEVQPGDHVIPCYQAECRECKFCKSGKTNLCGKVRAATGVGVMMNDRKSRFSINGKPIYHFMGTSTFSQYTVVHDVSVAKINPQAPLDKVCLLGCGVSTGLGAVWNTAKVEAGSIVAIFGLGTVGLAVAEGAKSAGASRIIGIDIDSKKFDVAKNFGVTEFVNPKDHDKPIQQVIVDLTDGGVDYSFECIGNVSVMRSALECCHKGWGTSVIVGVAASGQEISTRPFQLVTGRVWKGTAFGGFKSRSQVPWLVEKYLNKEIKVDEYVTHSMNLTDINKAFDLLHEGGCLRCVLATDK</sequence>
<accession>Q0DWH1</accession>
<accession>A0A0P0VRA8</accession>
<accession>P93436</accession>
<accession>Q6K6C1</accession>
<feature type="chain" id="PRO_0000160773" description="Alcohol dehydrogenase class-3">
    <location>
        <begin position="1"/>
        <end position="381"/>
    </location>
</feature>
<feature type="binding site" evidence="3">
    <location>
        <position position="49"/>
    </location>
    <ligand>
        <name>Zn(2+)</name>
        <dbReference type="ChEBI" id="CHEBI:29105"/>
        <label>1</label>
        <note>catalytic</note>
    </ligand>
</feature>
<feature type="binding site" evidence="3">
    <location>
        <position position="50"/>
    </location>
    <ligand>
        <name>NAD(+)</name>
        <dbReference type="ChEBI" id="CHEBI:57540"/>
    </ligand>
</feature>
<feature type="binding site" evidence="2">
    <location>
        <position position="51"/>
    </location>
    <ligand>
        <name>an alcohol</name>
        <dbReference type="ChEBI" id="CHEBI:30879"/>
    </ligand>
</feature>
<feature type="binding site" evidence="1">
    <location>
        <position position="71"/>
    </location>
    <ligand>
        <name>an alcohol</name>
        <dbReference type="ChEBI" id="CHEBI:30879"/>
    </ligand>
</feature>
<feature type="binding site" evidence="3">
    <location>
        <position position="71"/>
    </location>
    <ligand>
        <name>Zn(2+)</name>
        <dbReference type="ChEBI" id="CHEBI:29105"/>
        <label>1</label>
        <note>catalytic</note>
    </ligand>
</feature>
<feature type="binding site" evidence="3">
    <location>
        <position position="72"/>
    </location>
    <ligand>
        <name>Zn(2+)</name>
        <dbReference type="ChEBI" id="CHEBI:29105"/>
        <label>1</label>
        <note>catalytic</note>
    </ligand>
</feature>
<feature type="binding site" evidence="3">
    <location>
        <position position="101"/>
    </location>
    <ligand>
        <name>Zn(2+)</name>
        <dbReference type="ChEBI" id="CHEBI:29105"/>
        <label>2</label>
    </ligand>
</feature>
<feature type="binding site" evidence="3">
    <location>
        <position position="104"/>
    </location>
    <ligand>
        <name>Zn(2+)</name>
        <dbReference type="ChEBI" id="CHEBI:29105"/>
        <label>2</label>
    </ligand>
</feature>
<feature type="binding site" evidence="3">
    <location>
        <position position="107"/>
    </location>
    <ligand>
        <name>Zn(2+)</name>
        <dbReference type="ChEBI" id="CHEBI:29105"/>
        <label>2</label>
    </ligand>
</feature>
<feature type="binding site" evidence="3">
    <location>
        <position position="115"/>
    </location>
    <ligand>
        <name>Zn(2+)</name>
        <dbReference type="ChEBI" id="CHEBI:29105"/>
        <label>2</label>
    </ligand>
</feature>
<feature type="binding site" evidence="3">
    <location>
        <position position="179"/>
    </location>
    <ligand>
        <name>Zn(2+)</name>
        <dbReference type="ChEBI" id="CHEBI:29105"/>
        <label>1</label>
        <note>catalytic</note>
    </ligand>
</feature>
<feature type="binding site" evidence="3">
    <location>
        <begin position="204"/>
        <end position="209"/>
    </location>
    <ligand>
        <name>NAD(+)</name>
        <dbReference type="ChEBI" id="CHEBI:57540"/>
    </ligand>
</feature>
<feature type="binding site" evidence="3">
    <location>
        <position position="228"/>
    </location>
    <ligand>
        <name>NAD(+)</name>
        <dbReference type="ChEBI" id="CHEBI:57540"/>
    </ligand>
</feature>
<feature type="binding site" evidence="3">
    <location>
        <position position="233"/>
    </location>
    <ligand>
        <name>NAD(+)</name>
        <dbReference type="ChEBI" id="CHEBI:57540"/>
    </ligand>
</feature>
<feature type="binding site" evidence="3">
    <location>
        <position position="274"/>
    </location>
    <ligand>
        <name>NAD(+)</name>
        <dbReference type="ChEBI" id="CHEBI:57540"/>
    </ligand>
</feature>
<feature type="binding site" evidence="3">
    <location>
        <begin position="297"/>
        <end position="299"/>
    </location>
    <ligand>
        <name>NAD(+)</name>
        <dbReference type="ChEBI" id="CHEBI:57540"/>
    </ligand>
</feature>
<feature type="binding site" evidence="3">
    <location>
        <begin position="322"/>
        <end position="324"/>
    </location>
    <ligand>
        <name>NAD(+)</name>
        <dbReference type="ChEBI" id="CHEBI:57540"/>
    </ligand>
</feature>
<feature type="binding site" evidence="3">
    <location>
        <position position="374"/>
    </location>
    <ligand>
        <name>NAD(+)</name>
        <dbReference type="ChEBI" id="CHEBI:57540"/>
    </ligand>
</feature>
<feature type="sequence conflict" description="In Ref. 5; AK099733." evidence="4" ref="5">
    <original>V</original>
    <variation>I</variation>
    <location>
        <position position="318"/>
    </location>
</feature>
<keyword id="KW-0963">Cytoplasm</keyword>
<keyword id="KW-0479">Metal-binding</keyword>
<keyword id="KW-0520">NAD</keyword>
<keyword id="KW-0560">Oxidoreductase</keyword>
<keyword id="KW-1185">Reference proteome</keyword>
<keyword id="KW-0862">Zinc</keyword>
<name>ADHX_ORYSJ</name>
<protein>
    <recommendedName>
        <fullName>Alcohol dehydrogenase class-3</fullName>
        <ecNumber evidence="3">1.1.1.1</ecNumber>
    </recommendedName>
    <alternativeName>
        <fullName>Alcohol dehydrogenase class-III</fullName>
    </alternativeName>
    <alternativeName>
        <fullName>Glutathione-dependent formaldehyde dehydrogenase</fullName>
        <shortName>FALDH</shortName>
        <shortName>FDH</shortName>
        <shortName>GSH-FDH</shortName>
        <ecNumber>1.1.1.-</ecNumber>
    </alternativeName>
    <alternativeName>
        <fullName>S-(hydroxymethyl)glutathione dehydrogenase</fullName>
        <ecNumber evidence="3">1.1.1.284</ecNumber>
    </alternativeName>
</protein>